<dbReference type="EMBL" id="AAFI02000020">
    <property type="protein sequence ID" value="EAL68635.1"/>
    <property type="molecule type" value="Genomic_DNA"/>
</dbReference>
<dbReference type="RefSeq" id="XP_642577.1">
    <property type="nucleotide sequence ID" value="XM_637485.1"/>
</dbReference>
<dbReference type="SMR" id="Q8T1V4"/>
<dbReference type="FunCoup" id="Q8T1V4">
    <property type="interactions" value="470"/>
</dbReference>
<dbReference type="STRING" id="44689.Q8T1V4"/>
<dbReference type="PaxDb" id="44689-DDB0231065"/>
<dbReference type="EnsemblProtists" id="EAL68635">
    <property type="protein sequence ID" value="EAL68635"/>
    <property type="gene ID" value="DDB_G0277635"/>
</dbReference>
<dbReference type="GeneID" id="8621143"/>
<dbReference type="KEGG" id="ddi:DDB_G0277635"/>
<dbReference type="dictyBase" id="DDB_G0277635">
    <property type="gene designation" value="rps27"/>
</dbReference>
<dbReference type="VEuPathDB" id="AmoebaDB:DDB_G0277635"/>
<dbReference type="eggNOG" id="KOG1779">
    <property type="taxonomic scope" value="Eukaryota"/>
</dbReference>
<dbReference type="HOGENOM" id="CLU_130128_3_0_1"/>
<dbReference type="InParanoid" id="Q8T1V4"/>
<dbReference type="OMA" id="CASILCQ"/>
<dbReference type="PhylomeDB" id="Q8T1V4"/>
<dbReference type="Reactome" id="R-DDI-156827">
    <property type="pathway name" value="L13a-mediated translational silencing of Ceruloplasmin expression"/>
</dbReference>
<dbReference type="Reactome" id="R-DDI-1799339">
    <property type="pathway name" value="SRP-dependent cotranslational protein targeting to membrane"/>
</dbReference>
<dbReference type="Reactome" id="R-DDI-72689">
    <property type="pathway name" value="Formation of a pool of free 40S subunits"/>
</dbReference>
<dbReference type="Reactome" id="R-DDI-72695">
    <property type="pathway name" value="Formation of the ternary complex, and subsequently, the 43S complex"/>
</dbReference>
<dbReference type="Reactome" id="R-DDI-72702">
    <property type="pathway name" value="Ribosomal scanning and start codon recognition"/>
</dbReference>
<dbReference type="Reactome" id="R-DDI-72706">
    <property type="pathway name" value="GTP hydrolysis and joining of the 60S ribosomal subunit"/>
</dbReference>
<dbReference type="Reactome" id="R-DDI-975956">
    <property type="pathway name" value="Nonsense Mediated Decay (NMD) independent of the Exon Junction Complex (EJC)"/>
</dbReference>
<dbReference type="Reactome" id="R-DDI-975957">
    <property type="pathway name" value="Nonsense Mediated Decay (NMD) enhanced by the Exon Junction Complex (EJC)"/>
</dbReference>
<dbReference type="PRO" id="PR:Q8T1V4"/>
<dbReference type="Proteomes" id="UP000002195">
    <property type="component" value="Chromosome 2"/>
</dbReference>
<dbReference type="GO" id="GO:0022627">
    <property type="term" value="C:cytosolic small ribosomal subunit"/>
    <property type="evidence" value="ECO:0000318"/>
    <property type="project" value="GO_Central"/>
</dbReference>
<dbReference type="GO" id="GO:0003723">
    <property type="term" value="F:RNA binding"/>
    <property type="evidence" value="ECO:0000318"/>
    <property type="project" value="GO_Central"/>
</dbReference>
<dbReference type="GO" id="GO:0003735">
    <property type="term" value="F:structural constituent of ribosome"/>
    <property type="evidence" value="ECO:0000318"/>
    <property type="project" value="GO_Central"/>
</dbReference>
<dbReference type="GO" id="GO:0008270">
    <property type="term" value="F:zinc ion binding"/>
    <property type="evidence" value="ECO:0007669"/>
    <property type="project" value="UniProtKB-KW"/>
</dbReference>
<dbReference type="GO" id="GO:0000028">
    <property type="term" value="P:ribosomal small subunit assembly"/>
    <property type="evidence" value="ECO:0000318"/>
    <property type="project" value="GO_Central"/>
</dbReference>
<dbReference type="GO" id="GO:0006412">
    <property type="term" value="P:translation"/>
    <property type="evidence" value="ECO:0007669"/>
    <property type="project" value="InterPro"/>
</dbReference>
<dbReference type="FunFam" id="2.20.25.100:FF:000001">
    <property type="entry name" value="40S ribosomal protein S27"/>
    <property type="match status" value="1"/>
</dbReference>
<dbReference type="Gene3D" id="2.20.25.100">
    <property type="entry name" value="Zn-binding ribosomal proteins"/>
    <property type="match status" value="1"/>
</dbReference>
<dbReference type="HAMAP" id="MF_00371">
    <property type="entry name" value="Ribosomal_eS27"/>
    <property type="match status" value="1"/>
</dbReference>
<dbReference type="InterPro" id="IPR000592">
    <property type="entry name" value="Ribosomal_eS27"/>
</dbReference>
<dbReference type="InterPro" id="IPR023407">
    <property type="entry name" value="Ribosomal_eS27_Zn-bd_dom_sf"/>
</dbReference>
<dbReference type="InterPro" id="IPR011332">
    <property type="entry name" value="Ribosomal_zn-bd"/>
</dbReference>
<dbReference type="NCBIfam" id="TIGR01053">
    <property type="entry name" value="LSD1"/>
    <property type="match status" value="1"/>
</dbReference>
<dbReference type="PANTHER" id="PTHR11594">
    <property type="entry name" value="40S RIBOSOMAL PROTEIN S27"/>
    <property type="match status" value="1"/>
</dbReference>
<dbReference type="Pfam" id="PF01667">
    <property type="entry name" value="Ribosomal_S27e"/>
    <property type="match status" value="1"/>
</dbReference>
<dbReference type="SUPFAM" id="SSF57829">
    <property type="entry name" value="Zn-binding ribosomal proteins"/>
    <property type="match status" value="1"/>
</dbReference>
<organism>
    <name type="scientific">Dictyostelium discoideum</name>
    <name type="common">Social amoeba</name>
    <dbReference type="NCBI Taxonomy" id="44689"/>
    <lineage>
        <taxon>Eukaryota</taxon>
        <taxon>Amoebozoa</taxon>
        <taxon>Evosea</taxon>
        <taxon>Eumycetozoa</taxon>
        <taxon>Dictyostelia</taxon>
        <taxon>Dictyosteliales</taxon>
        <taxon>Dictyosteliaceae</taxon>
        <taxon>Dictyostelium</taxon>
    </lineage>
</organism>
<evidence type="ECO:0000255" key="1"/>
<evidence type="ECO:0000305" key="2"/>
<protein>
    <recommendedName>
        <fullName evidence="2">Small ribosomal subunit protein eS27</fullName>
    </recommendedName>
    <alternativeName>
        <fullName>40S ribosomal protein S27</fullName>
    </alternativeName>
</protein>
<proteinExistence type="inferred from homology"/>
<gene>
    <name type="primary">rps27</name>
    <name type="ORF">DDB_G0277635</name>
</gene>
<accession>Q8T1V4</accession>
<accession>Q54ZC0</accession>
<keyword id="KW-0479">Metal-binding</keyword>
<keyword id="KW-1185">Reference proteome</keyword>
<keyword id="KW-0687">Ribonucleoprotein</keyword>
<keyword id="KW-0689">Ribosomal protein</keyword>
<keyword id="KW-0862">Zinc</keyword>
<keyword id="KW-0863">Zinc-finger</keyword>
<name>RS27_DICDI</name>
<reference key="1">
    <citation type="journal article" date="2002" name="Nature">
        <title>Sequence and analysis of chromosome 2 of Dictyostelium discoideum.</title>
        <authorList>
            <person name="Gloeckner G."/>
            <person name="Eichinger L."/>
            <person name="Szafranski K."/>
            <person name="Pachebat J.A."/>
            <person name="Bankier A.T."/>
            <person name="Dear P.H."/>
            <person name="Lehmann R."/>
            <person name="Baumgart C."/>
            <person name="Parra G."/>
            <person name="Abril J.F."/>
            <person name="Guigo R."/>
            <person name="Kumpf K."/>
            <person name="Tunggal B."/>
            <person name="Cox E.C."/>
            <person name="Quail M.A."/>
            <person name="Platzer M."/>
            <person name="Rosenthal A."/>
            <person name="Noegel A.A."/>
        </authorList>
    </citation>
    <scope>NUCLEOTIDE SEQUENCE [LARGE SCALE GENOMIC DNA]</scope>
    <source>
        <strain>AX4</strain>
    </source>
</reference>
<reference key="2">
    <citation type="journal article" date="2005" name="Nature">
        <title>The genome of the social amoeba Dictyostelium discoideum.</title>
        <authorList>
            <person name="Eichinger L."/>
            <person name="Pachebat J.A."/>
            <person name="Gloeckner G."/>
            <person name="Rajandream M.A."/>
            <person name="Sucgang R."/>
            <person name="Berriman M."/>
            <person name="Song J."/>
            <person name="Olsen R."/>
            <person name="Szafranski K."/>
            <person name="Xu Q."/>
            <person name="Tunggal B."/>
            <person name="Kummerfeld S."/>
            <person name="Madera M."/>
            <person name="Konfortov B.A."/>
            <person name="Rivero F."/>
            <person name="Bankier A.T."/>
            <person name="Lehmann R."/>
            <person name="Hamlin N."/>
            <person name="Davies R."/>
            <person name="Gaudet P."/>
            <person name="Fey P."/>
            <person name="Pilcher K."/>
            <person name="Chen G."/>
            <person name="Saunders D."/>
            <person name="Sodergren E.J."/>
            <person name="Davis P."/>
            <person name="Kerhornou A."/>
            <person name="Nie X."/>
            <person name="Hall N."/>
            <person name="Anjard C."/>
            <person name="Hemphill L."/>
            <person name="Bason N."/>
            <person name="Farbrother P."/>
            <person name="Desany B."/>
            <person name="Just E."/>
            <person name="Morio T."/>
            <person name="Rost R."/>
            <person name="Churcher C.M."/>
            <person name="Cooper J."/>
            <person name="Haydock S."/>
            <person name="van Driessche N."/>
            <person name="Cronin A."/>
            <person name="Goodhead I."/>
            <person name="Muzny D.M."/>
            <person name="Mourier T."/>
            <person name="Pain A."/>
            <person name="Lu M."/>
            <person name="Harper D."/>
            <person name="Lindsay R."/>
            <person name="Hauser H."/>
            <person name="James K.D."/>
            <person name="Quiles M."/>
            <person name="Madan Babu M."/>
            <person name="Saito T."/>
            <person name="Buchrieser C."/>
            <person name="Wardroper A."/>
            <person name="Felder M."/>
            <person name="Thangavelu M."/>
            <person name="Johnson D."/>
            <person name="Knights A."/>
            <person name="Loulseged H."/>
            <person name="Mungall K.L."/>
            <person name="Oliver K."/>
            <person name="Price C."/>
            <person name="Quail M.A."/>
            <person name="Urushihara H."/>
            <person name="Hernandez J."/>
            <person name="Rabbinowitsch E."/>
            <person name="Steffen D."/>
            <person name="Sanders M."/>
            <person name="Ma J."/>
            <person name="Kohara Y."/>
            <person name="Sharp S."/>
            <person name="Simmonds M.N."/>
            <person name="Spiegler S."/>
            <person name="Tivey A."/>
            <person name="Sugano S."/>
            <person name="White B."/>
            <person name="Walker D."/>
            <person name="Woodward J.R."/>
            <person name="Winckler T."/>
            <person name="Tanaka Y."/>
            <person name="Shaulsky G."/>
            <person name="Schleicher M."/>
            <person name="Weinstock G.M."/>
            <person name="Rosenthal A."/>
            <person name="Cox E.C."/>
            <person name="Chisholm R.L."/>
            <person name="Gibbs R.A."/>
            <person name="Loomis W.F."/>
            <person name="Platzer M."/>
            <person name="Kay R.R."/>
            <person name="Williams J.G."/>
            <person name="Dear P.H."/>
            <person name="Noegel A.A."/>
            <person name="Barrell B.G."/>
            <person name="Kuspa A."/>
        </authorList>
    </citation>
    <scope>NUCLEOTIDE SEQUENCE [LARGE SCALE GENOMIC DNA]</scope>
    <source>
        <strain>AX4</strain>
    </source>
</reference>
<comment type="cofactor">
    <cofactor evidence="2">
        <name>Zn(2+)</name>
        <dbReference type="ChEBI" id="CHEBI:29105"/>
    </cofactor>
    <text evidence="2">Binds 1 zinc ion per subunit.</text>
</comment>
<comment type="similarity">
    <text evidence="2">Belongs to the eukaryotic ribosomal protein eS27 family.</text>
</comment>
<sequence length="85" mass="9449">MAKERGDLLFPSIESEKRKHKLKRLVQAPNSFFMDINCHGCRTITTVFSHAQNVVICSSCSTVIAQPTGGRARITAGCRLRQKSD</sequence>
<feature type="chain" id="PRO_0000326193" description="Small ribosomal subunit protein eS27">
    <location>
        <begin position="1"/>
        <end position="85"/>
    </location>
</feature>
<feature type="zinc finger region" description="C4-type" evidence="1">
    <location>
        <begin position="38"/>
        <end position="60"/>
    </location>
</feature>